<keyword id="KW-0963">Cytoplasm</keyword>
<keyword id="KW-1185">Reference proteome</keyword>
<feature type="chain" id="PRO_0000327874" description="Mannose-1-phosphate guanylyltransferase regulatory subunit alpha">
    <location>
        <begin position="1"/>
        <end position="420"/>
    </location>
</feature>
<feature type="region of interest" description="Substrate-binding domain" evidence="2">
    <location>
        <begin position="2"/>
        <end position="251"/>
    </location>
</feature>
<feature type="region of interest" description="Hexapeptide repeat domain" evidence="2">
    <location>
        <begin position="273"/>
        <end position="420"/>
    </location>
</feature>
<feature type="region of interest" description="C-loop" evidence="2">
    <location>
        <begin position="356"/>
        <end position="384"/>
    </location>
</feature>
<feature type="binding site" evidence="2">
    <location>
        <position position="85"/>
    </location>
    <ligand>
        <name>GDP-alpha-D-mannose</name>
        <dbReference type="ChEBI" id="CHEBI:57527"/>
    </ligand>
</feature>
<feature type="binding site" evidence="2">
    <location>
        <position position="247"/>
    </location>
    <ligand>
        <name>GDP-alpha-D-mannose</name>
        <dbReference type="ChEBI" id="CHEBI:57527"/>
    </ligand>
</feature>
<proteinExistence type="inferred from homology"/>
<evidence type="ECO:0000250" key="1"/>
<evidence type="ECO:0000250" key="2">
    <source>
        <dbReference type="UniProtKB" id="Q96IJ6"/>
    </source>
</evidence>
<evidence type="ECO:0000305" key="3"/>
<gene>
    <name type="primary">GMPPA</name>
</gene>
<comment type="function">
    <text evidence="2">Regulatory subunit of the GMPPA-GMPPB mannose-1-phosphate guanylyltransferase complex; reduces the catalytic activity of GMPPB when part of the complex. Mediates allosteric feedback inhibition of GMPPB catalytic activity upon binding GDP-alpha-D-mannose. Together with GMPPB regulates GDP-alpha-D-mannose levels.</text>
</comment>
<comment type="subunit">
    <text evidence="2">Component of the GMPPA-GMPPB mannose-1-phosphate guanylyltransferase complex composed of 4 GMPPA subunits and 8 GMPPB subunits; the complex is organized into three layers, a central layer made up of 2 GMPPA dimers sandwiched between two layers each made up of 2 GMPPB dimers.</text>
</comment>
<comment type="subcellular location">
    <subcellularLocation>
        <location evidence="1">Cytoplasm</location>
    </subcellularLocation>
</comment>
<comment type="domain">
    <text evidence="2">The N-terminal substrate-binding domain adopts a Rossman-like fold and has a binding pocket for GTP or GDP-alpha-D-mannose.</text>
</comment>
<comment type="domain">
    <text evidence="2">The C-terminal domain consists of a series of tandem hexapeptide repeats that adopt a beta-helix conformation. The beta-helix forms several protein interaction surfaces involved in assembly of the GMPPA-GMPPB mannose-1-phosphate guanylyltransferase complex. A loop extending from the C-terminal domain (C-loop) is involved in interaction with other subunits of the GMPPA-GMPPB complex and may be involved in allosteric inhibition of GMPPB catalytic activity by GMPPA.</text>
</comment>
<comment type="similarity">
    <text evidence="3">Belongs to the transferase hexapeptide repeat family.</text>
</comment>
<sequence>MLKAVILIGGPQKGTRFRPLSFEVPKPLFPVAGVPMIQHHIEACAQVPGMQEILLIGFYQPDEPLTQFLEAAQQEFNLPVRYLQEFAPLGTGGGLYHFRDQILAGSPEAFFVLNADVCSDFPLSAMLEAHRRQRHPFLLLGTTANRTQSLNYGCIVENPQTHEVLHYVEKPSTFISDIINCGIYLFSPEALKPLRDVFQRNQQDGQLEDSPGLWPGAGTIRLEQDVFSALAGQGQIYVHLTDGIWSQIKSAGSALYASRLYLSRYQDTHPERLAKHTPGGPRIRGNVYIHPTAKVAPSAVLGPNVSIGKGVTVGEGVRLRESIVLHGATLQEHTCVLHSIVGWGSTVGRWARVEGTPNDPNPNDPRARMDSESLFKDGKLLPAITILGCRVRIPAEVLILNSIVLPHKELSRSFTNQIIL</sequence>
<reference key="1">
    <citation type="submission" date="2008-01" db="EMBL/GenBank/DDBJ databases">
        <title>NISC comparative sequencing initiative.</title>
        <authorList>
            <person name="Antonellis A."/>
            <person name="Benjamin B."/>
            <person name="Blakesley R.W."/>
            <person name="Bouffard G.G."/>
            <person name="Brinkley C."/>
            <person name="Brooks S."/>
            <person name="Chu G."/>
            <person name="Chub I."/>
            <person name="Coleman H."/>
            <person name="Fuksenko T."/>
            <person name="Gestole M."/>
            <person name="Gregory M."/>
            <person name="Guan X."/>
            <person name="Gupta J."/>
            <person name="Gurson N."/>
            <person name="Han E."/>
            <person name="Han J."/>
            <person name="Hansen N."/>
            <person name="Hargrove A."/>
            <person name="Hines-Harris K."/>
            <person name="Ho S.-L."/>
            <person name="Hu P."/>
            <person name="Hunter G."/>
            <person name="Hurle B."/>
            <person name="Idol J.R."/>
            <person name="Johnson T."/>
            <person name="Knight E."/>
            <person name="Kwong P."/>
            <person name="Lee-Lin S.-Q."/>
            <person name="Legaspi R."/>
            <person name="Madden M."/>
            <person name="Maduro Q.L."/>
            <person name="Maduro V.B."/>
            <person name="Margulies E.H."/>
            <person name="Masiello C."/>
            <person name="Maskeri B."/>
            <person name="McDowell J."/>
            <person name="Merkulov G."/>
            <person name="Montemayor C."/>
            <person name="Mullikin J.C."/>
            <person name="Park M."/>
            <person name="Prasad A."/>
            <person name="Ramsahoye C."/>
            <person name="Reddix-Dugue N."/>
            <person name="Riebow N."/>
            <person name="Schandler K."/>
            <person name="Schueler M.G."/>
            <person name="Sison C."/>
            <person name="Smith L."/>
            <person name="Stantripop S."/>
            <person name="Thomas J.W."/>
            <person name="Thomas P.J."/>
            <person name="Tsipouri V."/>
            <person name="Young A."/>
            <person name="Green E.D."/>
        </authorList>
    </citation>
    <scope>NUCLEOTIDE SEQUENCE [LARGE SCALE GENOMIC DNA]</scope>
</reference>
<name>GMPPA_PAPAN</name>
<protein>
    <recommendedName>
        <fullName evidence="3">Mannose-1-phosphate guanylyltransferase regulatory subunit alpha</fullName>
    </recommendedName>
    <alternativeName>
        <fullName>GDP-mannose pyrophosphorylase A</fullName>
    </alternativeName>
    <alternativeName>
        <fullName>GTP-mannose-1-phosphate guanylyltransferase alpha</fullName>
    </alternativeName>
</protein>
<organism>
    <name type="scientific">Papio anubis</name>
    <name type="common">Olive baboon</name>
    <dbReference type="NCBI Taxonomy" id="9555"/>
    <lineage>
        <taxon>Eukaryota</taxon>
        <taxon>Metazoa</taxon>
        <taxon>Chordata</taxon>
        <taxon>Craniata</taxon>
        <taxon>Vertebrata</taxon>
        <taxon>Euteleostomi</taxon>
        <taxon>Mammalia</taxon>
        <taxon>Eutheria</taxon>
        <taxon>Euarchontoglires</taxon>
        <taxon>Primates</taxon>
        <taxon>Haplorrhini</taxon>
        <taxon>Catarrhini</taxon>
        <taxon>Cercopithecidae</taxon>
        <taxon>Cercopithecinae</taxon>
        <taxon>Papio</taxon>
    </lineage>
</organism>
<accession>B0CM52</accession>
<dbReference type="EMBL" id="DP000550">
    <property type="protein sequence ID" value="ABY67209.1"/>
    <property type="molecule type" value="Genomic_DNA"/>
</dbReference>
<dbReference type="RefSeq" id="NP_001162569.1">
    <property type="nucleotide sequence ID" value="NM_001169098.1"/>
</dbReference>
<dbReference type="RefSeq" id="XP_009181414.1">
    <property type="nucleotide sequence ID" value="XM_009183150.1"/>
</dbReference>
<dbReference type="RefSeq" id="XP_009181415.1">
    <property type="nucleotide sequence ID" value="XM_009183151.4"/>
</dbReference>
<dbReference type="RefSeq" id="XP_009181416.1">
    <property type="nucleotide sequence ID" value="XM_009183152.2"/>
</dbReference>
<dbReference type="RefSeq" id="XP_031507006.1">
    <property type="nucleotide sequence ID" value="XM_031651146.1"/>
</dbReference>
<dbReference type="SMR" id="B0CM52"/>
<dbReference type="STRING" id="9555.ENSPANP00000017912"/>
<dbReference type="Ensembl" id="ENSPANT00000080991.1">
    <property type="protein sequence ID" value="ENSPANP00000047838.1"/>
    <property type="gene ID" value="ENSPANG00000018458.3"/>
</dbReference>
<dbReference type="GeneID" id="100137607"/>
<dbReference type="KEGG" id="panu:100137607"/>
<dbReference type="CTD" id="29926"/>
<dbReference type="eggNOG" id="KOG1460">
    <property type="taxonomic scope" value="Eukaryota"/>
</dbReference>
<dbReference type="GeneTree" id="ENSGT00940000157018"/>
<dbReference type="HOGENOM" id="CLU_029499_3_0_1"/>
<dbReference type="Proteomes" id="UP000028761">
    <property type="component" value="Chromosome 10"/>
</dbReference>
<dbReference type="GO" id="GO:0005737">
    <property type="term" value="C:cytoplasm"/>
    <property type="evidence" value="ECO:0007669"/>
    <property type="project" value="UniProtKB-SubCell"/>
</dbReference>
<dbReference type="GO" id="GO:0120508">
    <property type="term" value="C:GDP-mannose pyrophosphorylase complex"/>
    <property type="evidence" value="ECO:0000250"/>
    <property type="project" value="FlyBase"/>
</dbReference>
<dbReference type="GO" id="GO:0016740">
    <property type="term" value="F:transferase activity"/>
    <property type="evidence" value="ECO:0007669"/>
    <property type="project" value="InterPro"/>
</dbReference>
<dbReference type="GO" id="GO:0009058">
    <property type="term" value="P:biosynthetic process"/>
    <property type="evidence" value="ECO:0007669"/>
    <property type="project" value="InterPro"/>
</dbReference>
<dbReference type="CDD" id="cd06428">
    <property type="entry name" value="M1P_guanylylT_A_like_N"/>
    <property type="match status" value="1"/>
</dbReference>
<dbReference type="FunFam" id="3.90.550.10:FF:000071">
    <property type="entry name" value="Mannose-1-phosphate guanyltransferase alpha"/>
    <property type="match status" value="1"/>
</dbReference>
<dbReference type="FunFam" id="2.160.10.10:FF:000023">
    <property type="entry name" value="Mannose-1-phosphate guanyltransferase alpha (Predicted)"/>
    <property type="match status" value="1"/>
</dbReference>
<dbReference type="Gene3D" id="2.160.10.10">
    <property type="entry name" value="Hexapeptide repeat proteins"/>
    <property type="match status" value="1"/>
</dbReference>
<dbReference type="Gene3D" id="3.90.550.10">
    <property type="entry name" value="Spore Coat Polysaccharide Biosynthesis Protein SpsA, Chain A"/>
    <property type="match status" value="1"/>
</dbReference>
<dbReference type="InterPro" id="IPR056729">
    <property type="entry name" value="GMPPB_C"/>
</dbReference>
<dbReference type="InterPro" id="IPR018357">
    <property type="entry name" value="Hexapep_transf_CS"/>
</dbReference>
<dbReference type="InterPro" id="IPR050486">
    <property type="entry name" value="Mannose-1P_guanyltransferase"/>
</dbReference>
<dbReference type="InterPro" id="IPR005835">
    <property type="entry name" value="NTP_transferase_dom"/>
</dbReference>
<dbReference type="InterPro" id="IPR029044">
    <property type="entry name" value="Nucleotide-diphossugar_trans"/>
</dbReference>
<dbReference type="PANTHER" id="PTHR22572">
    <property type="entry name" value="SUGAR-1-PHOSPHATE GUANYL TRANSFERASE"/>
    <property type="match status" value="1"/>
</dbReference>
<dbReference type="Pfam" id="PF25087">
    <property type="entry name" value="GMPPB_C"/>
    <property type="match status" value="1"/>
</dbReference>
<dbReference type="Pfam" id="PF00483">
    <property type="entry name" value="NTP_transferase"/>
    <property type="match status" value="1"/>
</dbReference>
<dbReference type="SUPFAM" id="SSF53448">
    <property type="entry name" value="Nucleotide-diphospho-sugar transferases"/>
    <property type="match status" value="1"/>
</dbReference>
<dbReference type="PROSITE" id="PS00101">
    <property type="entry name" value="HEXAPEP_TRANSFERASES"/>
    <property type="match status" value="1"/>
</dbReference>